<comment type="function">
    <text evidence="1">Catalyzes the ATP-dependent phosphorylation of N-acetyl-L-glutamate.</text>
</comment>
<comment type="catalytic activity">
    <reaction evidence="1">
        <text>N-acetyl-L-glutamate + ATP = N-acetyl-L-glutamyl 5-phosphate + ADP</text>
        <dbReference type="Rhea" id="RHEA:14629"/>
        <dbReference type="ChEBI" id="CHEBI:30616"/>
        <dbReference type="ChEBI" id="CHEBI:44337"/>
        <dbReference type="ChEBI" id="CHEBI:57936"/>
        <dbReference type="ChEBI" id="CHEBI:456216"/>
        <dbReference type="EC" id="2.7.2.8"/>
    </reaction>
</comment>
<comment type="pathway">
    <text evidence="1">Amino-acid biosynthesis; L-arginine biosynthesis; N(2)-acetyl-L-ornithine from L-glutamate: step 2/4.</text>
</comment>
<comment type="subcellular location">
    <subcellularLocation>
        <location evidence="1">Cytoplasm</location>
    </subcellularLocation>
</comment>
<comment type="similarity">
    <text evidence="1">Belongs to the acetylglutamate kinase family. ArgB subfamily.</text>
</comment>
<reference key="1">
    <citation type="submission" date="2007-08" db="EMBL/GenBank/DDBJ databases">
        <authorList>
            <consortium name="The Vibrio harveyi Genome Sequencing Project"/>
            <person name="Bassler B."/>
            <person name="Clifton S.W."/>
            <person name="Fulton L."/>
            <person name="Delehaunty K."/>
            <person name="Fronick C."/>
            <person name="Harrison M."/>
            <person name="Markivic C."/>
            <person name="Fulton R."/>
            <person name="Tin-Wollam A.-M."/>
            <person name="Shah N."/>
            <person name="Pepin K."/>
            <person name="Nash W."/>
            <person name="Thiruvilangam P."/>
            <person name="Bhonagiri V."/>
            <person name="Waters C."/>
            <person name="Tu K.C."/>
            <person name="Irgon J."/>
            <person name="Wilson R.K."/>
        </authorList>
    </citation>
    <scope>NUCLEOTIDE SEQUENCE [LARGE SCALE GENOMIC DNA]</scope>
    <source>
        <strain>ATCC BAA-1116 / BB120</strain>
    </source>
</reference>
<protein>
    <recommendedName>
        <fullName evidence="1">Acetylglutamate kinase</fullName>
        <ecNumber evidence="1">2.7.2.8</ecNumber>
    </recommendedName>
    <alternativeName>
        <fullName evidence="1">N-acetyl-L-glutamate 5-phosphotransferase</fullName>
    </alternativeName>
    <alternativeName>
        <fullName evidence="1">NAG kinase</fullName>
        <shortName evidence="1">NAGK</shortName>
    </alternativeName>
</protein>
<organism>
    <name type="scientific">Vibrio campbellii (strain ATCC BAA-1116)</name>
    <dbReference type="NCBI Taxonomy" id="2902295"/>
    <lineage>
        <taxon>Bacteria</taxon>
        <taxon>Pseudomonadati</taxon>
        <taxon>Pseudomonadota</taxon>
        <taxon>Gammaproteobacteria</taxon>
        <taxon>Vibrionales</taxon>
        <taxon>Vibrionaceae</taxon>
        <taxon>Vibrio</taxon>
    </lineage>
</organism>
<name>ARGB_VIBC1</name>
<evidence type="ECO:0000255" key="1">
    <source>
        <dbReference type="HAMAP-Rule" id="MF_00082"/>
    </source>
</evidence>
<sequence>MTQTNQAPLVIKLGGAALSCTQTLSQLFGAIAAYQKSAQRQIAIVHGGGYLVDELMTKLQLETVKKNGLRVTPYEQIPVIAGALAGTANKLLQGQAIADGLNAVGLSLADGGLCHVEELDPELGAVGKASPGDSTLLQAVLNAGALPIISSIGLTEKGQMMNVNADQAAVAVAGALDAELVLLSDVSGVLDGKGHLIKTLSEQEADALIQGQVITDGMIVKVKAALEAANDLGRPIEVATWRYPEKLTQLFAGESIGTQFLPQ</sequence>
<feature type="chain" id="PRO_1000010551" description="Acetylglutamate kinase">
    <location>
        <begin position="1"/>
        <end position="263"/>
    </location>
</feature>
<feature type="binding site" evidence="1">
    <location>
        <begin position="48"/>
        <end position="49"/>
    </location>
    <ligand>
        <name>substrate</name>
    </ligand>
</feature>
<feature type="binding site" evidence="1">
    <location>
        <position position="70"/>
    </location>
    <ligand>
        <name>substrate</name>
    </ligand>
</feature>
<feature type="binding site" evidence="1">
    <location>
        <position position="162"/>
    </location>
    <ligand>
        <name>substrate</name>
    </ligand>
</feature>
<feature type="site" description="Transition state stabilizer" evidence="1">
    <location>
        <position position="12"/>
    </location>
</feature>
<feature type="site" description="Transition state stabilizer" evidence="1">
    <location>
        <position position="221"/>
    </location>
</feature>
<gene>
    <name evidence="1" type="primary">argB</name>
    <name type="ordered locus">VIBHAR_00042</name>
</gene>
<accession>A7MXC0</accession>
<dbReference type="EC" id="2.7.2.8" evidence="1"/>
<dbReference type="EMBL" id="CP000789">
    <property type="protein sequence ID" value="ABU69102.1"/>
    <property type="molecule type" value="Genomic_DNA"/>
</dbReference>
<dbReference type="RefSeq" id="WP_012126442.1">
    <property type="nucleotide sequence ID" value="NC_009783.1"/>
</dbReference>
<dbReference type="SMR" id="A7MXC0"/>
<dbReference type="KEGG" id="vha:VIBHAR_00042"/>
<dbReference type="PATRIC" id="fig|338187.25.peg.2481"/>
<dbReference type="UniPathway" id="UPA00068">
    <property type="reaction ID" value="UER00107"/>
</dbReference>
<dbReference type="Proteomes" id="UP000008152">
    <property type="component" value="Chromosome I"/>
</dbReference>
<dbReference type="GO" id="GO:0005737">
    <property type="term" value="C:cytoplasm"/>
    <property type="evidence" value="ECO:0007669"/>
    <property type="project" value="UniProtKB-SubCell"/>
</dbReference>
<dbReference type="GO" id="GO:0003991">
    <property type="term" value="F:acetylglutamate kinase activity"/>
    <property type="evidence" value="ECO:0007669"/>
    <property type="project" value="UniProtKB-UniRule"/>
</dbReference>
<dbReference type="GO" id="GO:0005524">
    <property type="term" value="F:ATP binding"/>
    <property type="evidence" value="ECO:0007669"/>
    <property type="project" value="UniProtKB-UniRule"/>
</dbReference>
<dbReference type="GO" id="GO:0042450">
    <property type="term" value="P:arginine biosynthetic process via ornithine"/>
    <property type="evidence" value="ECO:0007669"/>
    <property type="project" value="UniProtKB-UniRule"/>
</dbReference>
<dbReference type="GO" id="GO:0006526">
    <property type="term" value="P:L-arginine biosynthetic process"/>
    <property type="evidence" value="ECO:0007669"/>
    <property type="project" value="UniProtKB-UniPathway"/>
</dbReference>
<dbReference type="CDD" id="cd04249">
    <property type="entry name" value="AAK_NAGK-NC"/>
    <property type="match status" value="1"/>
</dbReference>
<dbReference type="Gene3D" id="3.40.1160.10">
    <property type="entry name" value="Acetylglutamate kinase-like"/>
    <property type="match status" value="1"/>
</dbReference>
<dbReference type="HAMAP" id="MF_00082">
    <property type="entry name" value="ArgB"/>
    <property type="match status" value="1"/>
</dbReference>
<dbReference type="InterPro" id="IPR036393">
    <property type="entry name" value="AceGlu_kinase-like_sf"/>
</dbReference>
<dbReference type="InterPro" id="IPR004662">
    <property type="entry name" value="AcgluKinase_fam"/>
</dbReference>
<dbReference type="InterPro" id="IPR037528">
    <property type="entry name" value="ArgB"/>
</dbReference>
<dbReference type="InterPro" id="IPR001048">
    <property type="entry name" value="Asp/Glu/Uridylate_kinase"/>
</dbReference>
<dbReference type="InterPro" id="IPR041731">
    <property type="entry name" value="NAGK-NC"/>
</dbReference>
<dbReference type="NCBIfam" id="TIGR00761">
    <property type="entry name" value="argB"/>
    <property type="match status" value="1"/>
</dbReference>
<dbReference type="PANTHER" id="PTHR23342">
    <property type="entry name" value="N-ACETYLGLUTAMATE SYNTHASE"/>
    <property type="match status" value="1"/>
</dbReference>
<dbReference type="PANTHER" id="PTHR23342:SF0">
    <property type="entry name" value="N-ACETYLGLUTAMATE SYNTHASE, MITOCHONDRIAL"/>
    <property type="match status" value="1"/>
</dbReference>
<dbReference type="Pfam" id="PF00696">
    <property type="entry name" value="AA_kinase"/>
    <property type="match status" value="1"/>
</dbReference>
<dbReference type="PIRSF" id="PIRSF000728">
    <property type="entry name" value="NAGK"/>
    <property type="match status" value="1"/>
</dbReference>
<dbReference type="SUPFAM" id="SSF53633">
    <property type="entry name" value="Carbamate kinase-like"/>
    <property type="match status" value="1"/>
</dbReference>
<keyword id="KW-0028">Amino-acid biosynthesis</keyword>
<keyword id="KW-0055">Arginine biosynthesis</keyword>
<keyword id="KW-0067">ATP-binding</keyword>
<keyword id="KW-0963">Cytoplasm</keyword>
<keyword id="KW-0418">Kinase</keyword>
<keyword id="KW-0547">Nucleotide-binding</keyword>
<keyword id="KW-0808">Transferase</keyword>
<proteinExistence type="inferred from homology"/>